<accession>Q07K69</accession>
<proteinExistence type="inferred from homology"/>
<name>URED_RHOP5</name>
<sequence>MATPRRPRVNPIDTTLSESALFAANRAVGEVSFDVQRVDGVTRRNRLHESGSLRVRFPSPEGEGLSAMFVNTAGGIAGGDRFAVDIAAGEGTRLTLTTAAAEKIYRSNGPTSRLDIALKVAAGAALHWLPQETILFDQARVERRFEIDVAEGAALLLAEIVVFGRAAMGERMLSGSFVDRWRLRRGGRLMFAETVRLDGDIGQKLARPAIANGGAAIGTALIVPGDEKLVERLREAAQHFRGEVGISAWNGFAMARFCAQDAVRLRADMMAVLGRTGAALPRLWLN</sequence>
<evidence type="ECO:0000255" key="1">
    <source>
        <dbReference type="HAMAP-Rule" id="MF_01384"/>
    </source>
</evidence>
<organism>
    <name type="scientific">Rhodopseudomonas palustris (strain BisA53)</name>
    <dbReference type="NCBI Taxonomy" id="316055"/>
    <lineage>
        <taxon>Bacteria</taxon>
        <taxon>Pseudomonadati</taxon>
        <taxon>Pseudomonadota</taxon>
        <taxon>Alphaproteobacteria</taxon>
        <taxon>Hyphomicrobiales</taxon>
        <taxon>Nitrobacteraceae</taxon>
        <taxon>Rhodopseudomonas</taxon>
    </lineage>
</organism>
<feature type="chain" id="PRO_0000340510" description="Urease accessory protein UreD">
    <location>
        <begin position="1"/>
        <end position="286"/>
    </location>
</feature>
<gene>
    <name evidence="1" type="primary">ureD</name>
    <name type="ordered locus">RPE_3736</name>
</gene>
<dbReference type="EMBL" id="CP000463">
    <property type="protein sequence ID" value="ABJ07665.1"/>
    <property type="molecule type" value="Genomic_DNA"/>
</dbReference>
<dbReference type="SMR" id="Q07K69"/>
<dbReference type="STRING" id="316055.RPE_3736"/>
<dbReference type="KEGG" id="rpe:RPE_3736"/>
<dbReference type="eggNOG" id="COG0829">
    <property type="taxonomic scope" value="Bacteria"/>
</dbReference>
<dbReference type="HOGENOM" id="CLU_056339_2_0_5"/>
<dbReference type="GO" id="GO:0005737">
    <property type="term" value="C:cytoplasm"/>
    <property type="evidence" value="ECO:0007669"/>
    <property type="project" value="UniProtKB-SubCell"/>
</dbReference>
<dbReference type="GO" id="GO:0016151">
    <property type="term" value="F:nickel cation binding"/>
    <property type="evidence" value="ECO:0007669"/>
    <property type="project" value="UniProtKB-UniRule"/>
</dbReference>
<dbReference type="HAMAP" id="MF_01384">
    <property type="entry name" value="UreD"/>
    <property type="match status" value="1"/>
</dbReference>
<dbReference type="InterPro" id="IPR002669">
    <property type="entry name" value="UreD"/>
</dbReference>
<dbReference type="PANTHER" id="PTHR33643">
    <property type="entry name" value="UREASE ACCESSORY PROTEIN D"/>
    <property type="match status" value="1"/>
</dbReference>
<dbReference type="PANTHER" id="PTHR33643:SF1">
    <property type="entry name" value="UREASE ACCESSORY PROTEIN D"/>
    <property type="match status" value="1"/>
</dbReference>
<dbReference type="Pfam" id="PF01774">
    <property type="entry name" value="UreD"/>
    <property type="match status" value="1"/>
</dbReference>
<protein>
    <recommendedName>
        <fullName evidence="1">Urease accessory protein UreD</fullName>
    </recommendedName>
</protein>
<reference key="1">
    <citation type="submission" date="2006-09" db="EMBL/GenBank/DDBJ databases">
        <title>Complete sequence of Rhodopseudomonas palustris BisA53.</title>
        <authorList>
            <consortium name="US DOE Joint Genome Institute"/>
            <person name="Copeland A."/>
            <person name="Lucas S."/>
            <person name="Lapidus A."/>
            <person name="Barry K."/>
            <person name="Detter J.C."/>
            <person name="Glavina del Rio T."/>
            <person name="Hammon N."/>
            <person name="Israni S."/>
            <person name="Dalin E."/>
            <person name="Tice H."/>
            <person name="Pitluck S."/>
            <person name="Chain P."/>
            <person name="Malfatti S."/>
            <person name="Shin M."/>
            <person name="Vergez L."/>
            <person name="Schmutz J."/>
            <person name="Larimer F."/>
            <person name="Land M."/>
            <person name="Hauser L."/>
            <person name="Pelletier D.A."/>
            <person name="Kyrpides N."/>
            <person name="Kim E."/>
            <person name="Harwood C.S."/>
            <person name="Oda Y."/>
            <person name="Richardson P."/>
        </authorList>
    </citation>
    <scope>NUCLEOTIDE SEQUENCE [LARGE SCALE GENOMIC DNA]</scope>
    <source>
        <strain>BisA53</strain>
    </source>
</reference>
<keyword id="KW-0143">Chaperone</keyword>
<keyword id="KW-0963">Cytoplasm</keyword>
<keyword id="KW-0996">Nickel insertion</keyword>
<comment type="function">
    <text evidence="1">Required for maturation of urease via the functional incorporation of the urease nickel metallocenter.</text>
</comment>
<comment type="subunit">
    <text evidence="1">UreD, UreF and UreG form a complex that acts as a GTP-hydrolysis-dependent molecular chaperone, activating the urease apoprotein by helping to assemble the nickel containing metallocenter of UreC. The UreE protein probably delivers the nickel.</text>
</comment>
<comment type="subcellular location">
    <subcellularLocation>
        <location evidence="1">Cytoplasm</location>
    </subcellularLocation>
</comment>
<comment type="similarity">
    <text evidence="1">Belongs to the UreD family.</text>
</comment>